<comment type="function">
    <text>Hydrolyzes phosphatidylserine as well as phosphatidylcholine.</text>
</comment>
<comment type="catalytic activity">
    <reaction>
        <text>a 1,2-diacyl-sn-glycero-3-phosphocholine + H2O = phosphocholine + a 1,2-diacyl-sn-glycerol + H(+)</text>
        <dbReference type="Rhea" id="RHEA:10604"/>
        <dbReference type="ChEBI" id="CHEBI:15377"/>
        <dbReference type="ChEBI" id="CHEBI:15378"/>
        <dbReference type="ChEBI" id="CHEBI:17815"/>
        <dbReference type="ChEBI" id="CHEBI:57643"/>
        <dbReference type="ChEBI" id="CHEBI:295975"/>
        <dbReference type="EC" id="3.1.4.3"/>
    </reaction>
</comment>
<comment type="PTM">
    <text>Predicted to be exported by the Tat system. The position of the signal peptide cleavage has not been experimentally proven.</text>
</comment>
<comment type="similarity">
    <text evidence="2">Belongs to the bacterial phospholipase C family.</text>
</comment>
<proteinExistence type="evidence at protein level"/>
<sequence length="700" mass="77077">MTNQNRRDFLRLAAGTAGAAALQLFPPVIREALAIPANRRTGTIRDVEHIVILMQENRSFDHYFGKLRGVRGFGDPRPLALQNGKSVFHQPVLLGPAELLPFHPDASNLGMQFLQDLPHGWQDMHGAWNKGRYDRWIANKGTTTMAYLERDDIPFHYQLADAFTICDAYHCSIPSSTDPNRYYMWTGYVGNDGAGGGPVLGNEEAGYGWSTYPETLEQAGVSWKIYQDIGTGLDAAGSWGWTQNPYIGNYGDNSLLYFNQYRNAQPGSPLYDKARTGTNVSAGGTLFDVLQQDVKNGTLPQVSWICAPEAYSEHPNWPANYGAWYVEQVLKALTSNPDVWSKTALFITYDENDGFFDHVAPPFAPQSRENGLSTVSTAGEIFAGDATHMAGPYGLGPRVPMLVVSPWTKGGWVCSQTFDHTSLLQFIEARFNDRYSVRAPNVTPWRRAVCGDLTSAFNFSSPDGSWPQLPDTSGYAPPDRNRHPSYVPVPPAAQSMPKQEAGLRAARALPYELFVLGRIDQSTGKFKLTFANTGRAGAAFQVTAGNRLDGPWAYTVEARKRLSDEWSTALTLSIYDLTVYGPNGFLCQFRGSTAAALGLSANPEVIYGYDVANGNITLRLSNRGRAAVRLTVTNAYGNAAPRVYELKPGQRINDYWDLRDSHSWYDLSVSDGAPNGFLRRFAGHVETGRPSTSDPLIATA</sequence>
<reference key="1">
    <citation type="journal article" date="1999" name="J. Clin. Microbiol.">
        <title>Cloning and characterization of a nonhemolytic phospholipase C gene from Burkholderia pseudomallei.</title>
        <authorList>
            <person name="Korbsrisate S."/>
            <person name="Suwanasai N."/>
            <person name="Leelaporn A."/>
            <person name="Ezaki T."/>
            <person name="Kawamura Y."/>
            <person name="Sarasombath S."/>
        </authorList>
    </citation>
    <scope>NUCLEOTIDE SEQUENCE [GENOMIC DNA]</scope>
    <scope>CHARACTERIZATION</scope>
    <source>
        <strain>SPT1</strain>
    </source>
</reference>
<reference key="2">
    <citation type="journal article" date="2004" name="Proc. Natl. Acad. Sci. U.S.A.">
        <title>Genomic plasticity of the causative agent of melioidosis, Burkholderia pseudomallei.</title>
        <authorList>
            <person name="Holden M.T.G."/>
            <person name="Titball R.W."/>
            <person name="Peacock S.J."/>
            <person name="Cerdeno-Tarraga A.-M."/>
            <person name="Atkins T."/>
            <person name="Crossman L.C."/>
            <person name="Pitt T."/>
            <person name="Churcher C."/>
            <person name="Mungall K.L."/>
            <person name="Bentley S.D."/>
            <person name="Sebaihia M."/>
            <person name="Thomson N.R."/>
            <person name="Bason N."/>
            <person name="Beacham I.R."/>
            <person name="Brooks K."/>
            <person name="Brown K.A."/>
            <person name="Brown N.F."/>
            <person name="Challis G.L."/>
            <person name="Cherevach I."/>
            <person name="Chillingworth T."/>
            <person name="Cronin A."/>
            <person name="Crossett B."/>
            <person name="Davis P."/>
            <person name="DeShazer D."/>
            <person name="Feltwell T."/>
            <person name="Fraser A."/>
            <person name="Hance Z."/>
            <person name="Hauser H."/>
            <person name="Holroyd S."/>
            <person name="Jagels K."/>
            <person name="Keith K.E."/>
            <person name="Maddison M."/>
            <person name="Moule S."/>
            <person name="Price C."/>
            <person name="Quail M.A."/>
            <person name="Rabbinowitsch E."/>
            <person name="Rutherford K."/>
            <person name="Sanders M."/>
            <person name="Simmonds M."/>
            <person name="Songsivilai S."/>
            <person name="Stevens K."/>
            <person name="Tumapa S."/>
            <person name="Vesaratchavest M."/>
            <person name="Whitehead S."/>
            <person name="Yeats C."/>
            <person name="Barrell B.G."/>
            <person name="Oyston P.C.F."/>
            <person name="Parkhill J."/>
        </authorList>
    </citation>
    <scope>NUCLEOTIDE SEQUENCE [LARGE SCALE GENOMIC DNA]</scope>
    <source>
        <strain>K96243</strain>
    </source>
</reference>
<protein>
    <recommendedName>
        <fullName>Non-hemolytic phospholipase C</fullName>
        <ecNumber>3.1.4.3</ecNumber>
    </recommendedName>
    <alternativeName>
        <fullName>PLC-N</fullName>
    </alternativeName>
    <alternativeName>
        <fullName>Phosphatidylcholine cholinephosphohydrolase</fullName>
    </alternativeName>
    <alternativeName>
        <fullName>Phosphatidylcholine-hydrolyzing phospholipase C</fullName>
        <shortName>PC-PLC</shortName>
    </alternativeName>
</protein>
<organism>
    <name type="scientific">Burkholderia pseudomallei (strain K96243)</name>
    <dbReference type="NCBI Taxonomy" id="272560"/>
    <lineage>
        <taxon>Bacteria</taxon>
        <taxon>Pseudomonadati</taxon>
        <taxon>Pseudomonadota</taxon>
        <taxon>Betaproteobacteria</taxon>
        <taxon>Burkholderiales</taxon>
        <taxon>Burkholderiaceae</taxon>
        <taxon>Burkholderia</taxon>
        <taxon>pseudomallei group</taxon>
    </lineage>
</organism>
<keyword id="KW-0378">Hydrolase</keyword>
<keyword id="KW-1185">Reference proteome</keyword>
<keyword id="KW-0732">Signal</keyword>
<gene>
    <name type="primary">plcN</name>
    <name type="ordered locus">BPSL2403</name>
</gene>
<dbReference type="EC" id="3.1.4.3"/>
<dbReference type="EMBL" id="AF107252">
    <property type="protein sequence ID" value="AAF17299.1"/>
    <property type="molecule type" value="Genomic_DNA"/>
</dbReference>
<dbReference type="EMBL" id="BX571965">
    <property type="protein sequence ID" value="CAH36406.1"/>
    <property type="molecule type" value="Genomic_DNA"/>
</dbReference>
<dbReference type="RefSeq" id="WP_004527449.1">
    <property type="nucleotide sequence ID" value="NZ_CP009538.1"/>
</dbReference>
<dbReference type="RefSeq" id="YP_108995.1">
    <property type="nucleotide sequence ID" value="NC_006350.1"/>
</dbReference>
<dbReference type="SMR" id="Q9RGS8"/>
<dbReference type="STRING" id="272560.BPSL2403"/>
<dbReference type="KEGG" id="bps:BPSL2403"/>
<dbReference type="PATRIC" id="fig|272560.51.peg.2993"/>
<dbReference type="eggNOG" id="COG3511">
    <property type="taxonomic scope" value="Bacteria"/>
</dbReference>
<dbReference type="BRENDA" id="3.1.4.3">
    <property type="organism ID" value="1031"/>
</dbReference>
<dbReference type="Proteomes" id="UP000000605">
    <property type="component" value="Chromosome 1"/>
</dbReference>
<dbReference type="GO" id="GO:0034480">
    <property type="term" value="F:phosphatidylcholine phospholipase C activity"/>
    <property type="evidence" value="ECO:0007669"/>
    <property type="project" value="UniProtKB-EC"/>
</dbReference>
<dbReference type="GO" id="GO:0016042">
    <property type="term" value="P:lipid catabolic process"/>
    <property type="evidence" value="ECO:0007669"/>
    <property type="project" value="InterPro"/>
</dbReference>
<dbReference type="CDD" id="cd16014">
    <property type="entry name" value="PLC"/>
    <property type="match status" value="1"/>
</dbReference>
<dbReference type="Gene3D" id="3.40.720.10">
    <property type="entry name" value="Alkaline Phosphatase, subunit A"/>
    <property type="match status" value="2"/>
</dbReference>
<dbReference type="InterPro" id="IPR017850">
    <property type="entry name" value="Alkaline_phosphatase_core_sf"/>
</dbReference>
<dbReference type="InterPro" id="IPR017767">
    <property type="entry name" value="PC-PLC"/>
</dbReference>
<dbReference type="InterPro" id="IPR007312">
    <property type="entry name" value="Phosphoesterase"/>
</dbReference>
<dbReference type="InterPro" id="IPR008475">
    <property type="entry name" value="PLipase_C_C"/>
</dbReference>
<dbReference type="InterPro" id="IPR006311">
    <property type="entry name" value="TAT_signal"/>
</dbReference>
<dbReference type="InterPro" id="IPR019546">
    <property type="entry name" value="TAT_signal_bac_arc"/>
</dbReference>
<dbReference type="NCBIfam" id="TIGR03396">
    <property type="entry name" value="PC_PLC"/>
    <property type="match status" value="1"/>
</dbReference>
<dbReference type="NCBIfam" id="TIGR01409">
    <property type="entry name" value="TAT_signal_seq"/>
    <property type="match status" value="1"/>
</dbReference>
<dbReference type="PANTHER" id="PTHR31956:SF1">
    <property type="entry name" value="NON-SPECIFIC PHOSPHOLIPASE C1"/>
    <property type="match status" value="1"/>
</dbReference>
<dbReference type="PANTHER" id="PTHR31956">
    <property type="entry name" value="NON-SPECIFIC PHOSPHOLIPASE C4-RELATED"/>
    <property type="match status" value="1"/>
</dbReference>
<dbReference type="Pfam" id="PF04185">
    <property type="entry name" value="Phosphoesterase"/>
    <property type="match status" value="1"/>
</dbReference>
<dbReference type="Pfam" id="PF05506">
    <property type="entry name" value="PLipase_C_C"/>
    <property type="match status" value="2"/>
</dbReference>
<dbReference type="PROSITE" id="PS51318">
    <property type="entry name" value="TAT"/>
    <property type="match status" value="1"/>
</dbReference>
<feature type="signal peptide" description="Tat-type signal" evidence="1">
    <location>
        <begin position="1"/>
        <end position="34"/>
    </location>
</feature>
<feature type="chain" id="PRO_0000023940" description="Non-hemolytic phospholipase C">
    <location>
        <begin position="35"/>
        <end position="700"/>
    </location>
</feature>
<feature type="sequence conflict" description="In Ref. 1; AAF17299." evidence="2" ref="1">
    <original>A</original>
    <variation>T</variation>
    <location>
        <position position="80"/>
    </location>
</feature>
<feature type="sequence conflict" description="In Ref. 1; AAF17299." evidence="2" ref="1">
    <original>S</original>
    <variation>P</variation>
    <location>
        <position position="86"/>
    </location>
</feature>
<feature type="sequence conflict" description="In Ref. 1; AAF17299." evidence="2" ref="1">
    <original>M</original>
    <variation>T</variation>
    <location>
        <position position="124"/>
    </location>
</feature>
<feature type="sequence conflict" description="In Ref. 1; AAF17299." evidence="2" ref="1">
    <original>D</original>
    <variation>G</variation>
    <location>
        <position position="151"/>
    </location>
</feature>
<feature type="sequence conflict" description="In Ref. 1; AAF17299." evidence="2" ref="1">
    <original>S</original>
    <variation>A</variation>
    <location>
        <position position="254"/>
    </location>
</feature>
<feature type="sequence conflict" description="In Ref. 1; AAF17299." evidence="2" ref="1">
    <original>E</original>
    <variation>D</variation>
    <location>
        <position position="369"/>
    </location>
</feature>
<feature type="sequence conflict" description="In Ref. 1; AAF17299." evidence="2" ref="1">
    <original>A</original>
    <variation>P</variation>
    <location>
        <position position="383"/>
    </location>
</feature>
<feature type="sequence conflict" description="In Ref. 1; AAF17299." evidence="2" ref="1">
    <original>T</original>
    <variation>A</variation>
    <location>
        <position position="387"/>
    </location>
</feature>
<feature type="sequence conflict" description="In Ref. 1; AAF17299." evidence="2" ref="1">
    <original>S</original>
    <variation>P</variation>
    <location>
        <position position="436"/>
    </location>
</feature>
<feature type="sequence conflict" description="In Ref. 1; AAF17299." evidence="2" ref="1">
    <original>A</original>
    <variation>V</variation>
    <location>
        <position position="492"/>
    </location>
</feature>
<feature type="sequence conflict" description="In Ref. 1; AAF17299." evidence="2" ref="1">
    <original>N</original>
    <variation>K</variation>
    <location>
        <position position="532"/>
    </location>
</feature>
<feature type="sequence conflict" description="In Ref. 1; AAF17299." evidence="2" ref="1">
    <original>L</original>
    <variation>V</variation>
    <location>
        <position position="548"/>
    </location>
</feature>
<feature type="sequence conflict" description="In Ref. 1; AAF17299." evidence="2" ref="1">
    <original>I</original>
    <variation>L</variation>
    <location>
        <position position="574"/>
    </location>
</feature>
<feature type="sequence conflict" description="In Ref. 1; AAF17299." evidence="2" ref="1">
    <original>S</original>
    <variation>N</variation>
    <location>
        <position position="600"/>
    </location>
</feature>
<feature type="sequence conflict" description="In Ref. 1; AAF17299." evidence="2" ref="1">
    <original>A</original>
    <variation>T</variation>
    <location>
        <position position="627"/>
    </location>
</feature>
<feature type="sequence conflict" description="In Ref. 1; AAF17299." evidence="2" ref="1">
    <original>T</original>
    <variation>A</variation>
    <location>
        <position position="633"/>
    </location>
</feature>
<feature type="sequence conflict" description="In Ref. 1; AAF17299." evidence="2" ref="1">
    <original>NAA</original>
    <variation>KES</variation>
    <location>
        <begin position="638"/>
        <end position="640"/>
    </location>
</feature>
<feature type="sequence conflict" description="In Ref. 1; AAF17299." evidence="2" ref="1">
    <original>S</original>
    <variation>T</variation>
    <location>
        <position position="668"/>
    </location>
</feature>
<feature type="sequence conflict" description="In Ref. 1; AAF17299." evidence="2" ref="1">
    <original>A</original>
    <variation>V</variation>
    <location>
        <position position="700"/>
    </location>
</feature>
<name>PHLN_BURPS</name>
<evidence type="ECO:0000255" key="1">
    <source>
        <dbReference type="PROSITE-ProRule" id="PRU00648"/>
    </source>
</evidence>
<evidence type="ECO:0000305" key="2"/>
<accession>Q9RGS8</accession>
<accession>Q63SC1</accession>